<evidence type="ECO:0000250" key="1"/>
<evidence type="ECO:0000250" key="2">
    <source>
        <dbReference type="UniProtKB" id="P80321"/>
    </source>
</evidence>
<evidence type="ECO:0000256" key="3">
    <source>
        <dbReference type="SAM" id="MobiDB-lite"/>
    </source>
</evidence>
<evidence type="ECO:0000305" key="4"/>
<accession>P81484</accession>
<comment type="similarity">
    <text evidence="4">Belongs to the Bowman-Birk serine protease inhibitor family.</text>
</comment>
<dbReference type="GO" id="GO:0005576">
    <property type="term" value="C:extracellular region"/>
    <property type="evidence" value="ECO:0007669"/>
    <property type="project" value="InterPro"/>
</dbReference>
<dbReference type="GO" id="GO:0004867">
    <property type="term" value="F:serine-type endopeptidase inhibitor activity"/>
    <property type="evidence" value="ECO:0007669"/>
    <property type="project" value="UniProtKB-KW"/>
</dbReference>
<dbReference type="CDD" id="cd00023">
    <property type="entry name" value="BBI"/>
    <property type="match status" value="1"/>
</dbReference>
<dbReference type="FunFam" id="2.10.69.10:FF:000001">
    <property type="entry name" value="Bowman-Birk type proteinase inhibitor"/>
    <property type="match status" value="1"/>
</dbReference>
<dbReference type="Gene3D" id="2.10.69.10">
    <property type="entry name" value="Cysteine Protease (Bromelain) Inhibitor, subunit H"/>
    <property type="match status" value="1"/>
</dbReference>
<dbReference type="InterPro" id="IPR035995">
    <property type="entry name" value="Bowman-Birk_prot_inh"/>
</dbReference>
<dbReference type="InterPro" id="IPR000877">
    <property type="entry name" value="Prot_inh_BBI"/>
</dbReference>
<dbReference type="Pfam" id="PF00228">
    <property type="entry name" value="Bowman-Birk_leg"/>
    <property type="match status" value="2"/>
</dbReference>
<dbReference type="SMART" id="SM00269">
    <property type="entry name" value="BowB"/>
    <property type="match status" value="1"/>
</dbReference>
<dbReference type="SUPFAM" id="SSF57247">
    <property type="entry name" value="Bowman-Birk inhibitor, BBI"/>
    <property type="match status" value="1"/>
</dbReference>
<feature type="chain" id="PRO_0000105852" description="Bowman-Birk type proteinase inhibitor PVI-3(2)">
    <location>
        <begin position="1"/>
        <end position="85"/>
    </location>
</feature>
<feature type="region of interest" description="Disordered" evidence="3">
    <location>
        <begin position="1"/>
        <end position="20"/>
    </location>
</feature>
<feature type="compositionally biased region" description="Low complexity" evidence="3">
    <location>
        <begin position="8"/>
        <end position="18"/>
    </location>
</feature>
<feature type="site" description="Reactive bond for trypsin" evidence="1">
    <location>
        <begin position="29"/>
        <end position="30"/>
    </location>
</feature>
<feature type="site" description="Reactive bond for chymotrypsin" evidence="1">
    <location>
        <begin position="56"/>
        <end position="57"/>
    </location>
</feature>
<feature type="disulfide bond" evidence="2">
    <location>
        <begin position="21"/>
        <end position="75"/>
    </location>
</feature>
<feature type="disulfide bond" evidence="2">
    <location>
        <begin position="22"/>
        <end position="37"/>
    </location>
</feature>
<feature type="disulfide bond" evidence="2">
    <location>
        <begin position="25"/>
        <end position="71"/>
    </location>
</feature>
<feature type="disulfide bond" evidence="2">
    <location>
        <begin position="27"/>
        <end position="35"/>
    </location>
</feature>
<feature type="disulfide bond" evidence="2">
    <location>
        <begin position="45"/>
        <end position="52"/>
    </location>
</feature>
<feature type="disulfide bond" evidence="2">
    <location>
        <begin position="49"/>
        <end position="64"/>
    </location>
</feature>
<feature type="disulfide bond" evidence="2">
    <location>
        <begin position="54"/>
        <end position="62"/>
    </location>
</feature>
<keyword id="KW-0903">Direct protein sequencing</keyword>
<keyword id="KW-1015">Disulfide bond</keyword>
<keyword id="KW-0646">Protease inhibitor</keyword>
<keyword id="KW-0722">Serine protease inhibitor</keyword>
<proteinExistence type="evidence at protein level"/>
<name>IBB3_PHAVU</name>
<reference key="1">
    <citation type="journal article" date="1993" name="Z. Lebensm. Unters. Forsch.">
        <title>Primary structures of proteinase inhibitors from Phaseolus vulgaris var. nanus (cv. Borlotto).</title>
        <authorList>
            <person name="Funk A."/>
            <person name="Weder J.K."/>
            <person name="Belitz H.-D."/>
        </authorList>
    </citation>
    <scope>PROTEIN SEQUENCE</scope>
    <source>
        <strain>cv. Borlotto</strain>
    </source>
</reference>
<protein>
    <recommendedName>
        <fullName>Bowman-Birk type proteinase inhibitor PVI-3(2)</fullName>
    </recommendedName>
</protein>
<organism>
    <name type="scientific">Phaseolus vulgaris</name>
    <name type="common">Kidney bean</name>
    <name type="synonym">French bean</name>
    <dbReference type="NCBI Taxonomy" id="3885"/>
    <lineage>
        <taxon>Eukaryota</taxon>
        <taxon>Viridiplantae</taxon>
        <taxon>Streptophyta</taxon>
        <taxon>Embryophyta</taxon>
        <taxon>Tracheophyta</taxon>
        <taxon>Spermatophyta</taxon>
        <taxon>Magnoliopsida</taxon>
        <taxon>eudicotyledons</taxon>
        <taxon>Gunneridae</taxon>
        <taxon>Pentapetalae</taxon>
        <taxon>rosids</taxon>
        <taxon>fabids</taxon>
        <taxon>Fabales</taxon>
        <taxon>Fabaceae</taxon>
        <taxon>Papilionoideae</taxon>
        <taxon>50 kb inversion clade</taxon>
        <taxon>NPAAA clade</taxon>
        <taxon>indigoferoid/millettioid clade</taxon>
        <taxon>Phaseoleae</taxon>
        <taxon>Phaseolus</taxon>
    </lineage>
</organism>
<sequence length="85" mass="9221">SGHRHESXBSTBXASXSSKPCCBHCACTKSIPPQCRCSBLRLNSCHSECKGCICTFSIPAQCICTDTNNFCYEPCKSSHGPBBNN</sequence>